<proteinExistence type="evidence at transcript level"/>
<name>ERD22_XENLA</name>
<evidence type="ECO:0000250" key="1">
    <source>
        <dbReference type="UniProtKB" id="P24390"/>
    </source>
</evidence>
<evidence type="ECO:0000250" key="2">
    <source>
        <dbReference type="UniProtKB" id="P33947"/>
    </source>
</evidence>
<evidence type="ECO:0000250" key="3">
    <source>
        <dbReference type="UniProtKB" id="Q5ZKX9"/>
    </source>
</evidence>
<evidence type="ECO:0000305" key="4"/>
<organism>
    <name type="scientific">Xenopus laevis</name>
    <name type="common">African clawed frog</name>
    <dbReference type="NCBI Taxonomy" id="8355"/>
    <lineage>
        <taxon>Eukaryota</taxon>
        <taxon>Metazoa</taxon>
        <taxon>Chordata</taxon>
        <taxon>Craniata</taxon>
        <taxon>Vertebrata</taxon>
        <taxon>Euteleostomi</taxon>
        <taxon>Amphibia</taxon>
        <taxon>Batrachia</taxon>
        <taxon>Anura</taxon>
        <taxon>Pipoidea</taxon>
        <taxon>Pipidae</taxon>
        <taxon>Xenopodinae</taxon>
        <taxon>Xenopus</taxon>
        <taxon>Xenopus</taxon>
    </lineage>
</organism>
<dbReference type="EMBL" id="BC044272">
    <property type="protein sequence ID" value="AAH44272.1"/>
    <property type="molecule type" value="mRNA"/>
</dbReference>
<dbReference type="RefSeq" id="NP_001080638.1">
    <property type="nucleotide sequence ID" value="NM_001087169.1"/>
</dbReference>
<dbReference type="SMR" id="Q7ZXS5"/>
<dbReference type="DNASU" id="380330"/>
<dbReference type="GeneID" id="380330"/>
<dbReference type="KEGG" id="xla:380330"/>
<dbReference type="AGR" id="Xenbase:XB-GENE-941349"/>
<dbReference type="CTD" id="380330"/>
<dbReference type="Xenbase" id="XB-GENE-941349">
    <property type="gene designation" value="kdelr2.L"/>
</dbReference>
<dbReference type="OMA" id="KLIYLAC"/>
<dbReference type="OrthoDB" id="7694678at2759"/>
<dbReference type="Proteomes" id="UP000186698">
    <property type="component" value="Chromosome 9_10L"/>
</dbReference>
<dbReference type="Bgee" id="380330">
    <property type="expression patterns" value="Expressed in gastrula and 19 other cell types or tissues"/>
</dbReference>
<dbReference type="GO" id="GO:0005801">
    <property type="term" value="C:cis-Golgi network"/>
    <property type="evidence" value="ECO:0000318"/>
    <property type="project" value="GO_Central"/>
</dbReference>
<dbReference type="GO" id="GO:0030663">
    <property type="term" value="C:COPI-coated vesicle membrane"/>
    <property type="evidence" value="ECO:0007669"/>
    <property type="project" value="UniProtKB-SubCell"/>
</dbReference>
<dbReference type="GO" id="GO:0005783">
    <property type="term" value="C:endoplasmic reticulum"/>
    <property type="evidence" value="ECO:0000318"/>
    <property type="project" value="GO_Central"/>
</dbReference>
<dbReference type="GO" id="GO:0005789">
    <property type="term" value="C:endoplasmic reticulum membrane"/>
    <property type="evidence" value="ECO:0000250"/>
    <property type="project" value="UniProtKB"/>
</dbReference>
<dbReference type="GO" id="GO:0000139">
    <property type="term" value="C:Golgi membrane"/>
    <property type="evidence" value="ECO:0000250"/>
    <property type="project" value="UniProtKB"/>
</dbReference>
<dbReference type="GO" id="GO:0016020">
    <property type="term" value="C:membrane"/>
    <property type="evidence" value="ECO:0000250"/>
    <property type="project" value="UniProtKB"/>
</dbReference>
<dbReference type="GO" id="GO:0046923">
    <property type="term" value="F:ER retention sequence binding"/>
    <property type="evidence" value="ECO:0000318"/>
    <property type="project" value="GO_Central"/>
</dbReference>
<dbReference type="GO" id="GO:0005046">
    <property type="term" value="F:KDEL sequence binding"/>
    <property type="evidence" value="ECO:0000250"/>
    <property type="project" value="UniProtKB"/>
</dbReference>
<dbReference type="GO" id="GO:0006621">
    <property type="term" value="P:protein retention in ER lumen"/>
    <property type="evidence" value="ECO:0000318"/>
    <property type="project" value="GO_Central"/>
</dbReference>
<dbReference type="GO" id="GO:0015031">
    <property type="term" value="P:protein transport"/>
    <property type="evidence" value="ECO:0007669"/>
    <property type="project" value="UniProtKB-KW"/>
</dbReference>
<dbReference type="GO" id="GO:0006890">
    <property type="term" value="P:retrograde vesicle-mediated transport, Golgi to endoplasmic reticulum"/>
    <property type="evidence" value="ECO:0000250"/>
    <property type="project" value="UniProtKB"/>
</dbReference>
<dbReference type="InterPro" id="IPR000133">
    <property type="entry name" value="ER_ret_rcpt"/>
</dbReference>
<dbReference type="PANTHER" id="PTHR10585">
    <property type="entry name" value="ER LUMEN PROTEIN RETAINING RECEPTOR"/>
    <property type="match status" value="1"/>
</dbReference>
<dbReference type="Pfam" id="PF00810">
    <property type="entry name" value="ER_lumen_recept"/>
    <property type="match status" value="1"/>
</dbReference>
<dbReference type="PRINTS" id="PR00660">
    <property type="entry name" value="ERLUMENR"/>
</dbReference>
<dbReference type="PROSITE" id="PS00952">
    <property type="entry name" value="ER_LUMEN_RECEPTOR_2"/>
    <property type="match status" value="1"/>
</dbReference>
<keyword id="KW-0968">Cytoplasmic vesicle</keyword>
<keyword id="KW-0256">Endoplasmic reticulum</keyword>
<keyword id="KW-0931">ER-Golgi transport</keyword>
<keyword id="KW-0333">Golgi apparatus</keyword>
<keyword id="KW-0472">Membrane</keyword>
<keyword id="KW-0653">Protein transport</keyword>
<keyword id="KW-0675">Receptor</keyword>
<keyword id="KW-1185">Reference proteome</keyword>
<keyword id="KW-0812">Transmembrane</keyword>
<keyword id="KW-1133">Transmembrane helix</keyword>
<keyword id="KW-0813">Transport</keyword>
<reference key="1">
    <citation type="submission" date="2003-01" db="EMBL/GenBank/DDBJ databases">
        <authorList>
            <consortium name="NIH - Xenopus Gene Collection (XGC) project"/>
        </authorList>
    </citation>
    <scope>NUCLEOTIDE SEQUENCE [LARGE SCALE MRNA]</scope>
    <source>
        <tissue>Embryo</tissue>
    </source>
</reference>
<comment type="function">
    <text evidence="2 3">Receptor for the C-terminal sequence motif K-D-E-L that is present on endoplasmic reticulum resident proteins and that mediates their recycling from the Golgi back to the endoplasmic reticulum (By similarity). Binding is pH dependent, and is optimal at pH 5-5.4 (By similarity).</text>
</comment>
<comment type="subcellular location">
    <subcellularLocation>
        <location evidence="2">Endoplasmic reticulum membrane</location>
        <topology evidence="3">Multi-pass membrane protein</topology>
    </subcellularLocation>
    <subcellularLocation>
        <location evidence="2">Golgi apparatus membrane</location>
        <topology evidence="3">Multi-pass membrane protein</topology>
    </subcellularLocation>
    <subcellularLocation>
        <location evidence="2">Cytoplasmic vesicle</location>
        <location evidence="2">COPI-coated vesicle membrane</location>
        <topology evidence="3">Multi-pass membrane protein</topology>
    </subcellularLocation>
    <text evidence="2">Localized in the Golgi in the absence of bound proteins with the sequence motif K-D-E-L. Trafficks back to the endoplasmic reticulum together with cargo proteins containing the sequence motif K-D-E-L.</text>
</comment>
<comment type="domain">
    <text evidence="1 3">Binds the C-terminal sequence motif K-D-E-L in a hydrophilic cavity between the transmembrane domains. This triggers a conformation change that exposes a Lys-rich patch on the cytosolic surface of the protein (By similarity). This patch mediates recycling from the Golgi to the endoplasmic reticulum, probably via COPI vesicles (By similarity).</text>
</comment>
<comment type="similarity">
    <text evidence="4">Belongs to the ERD2 family.</text>
</comment>
<feature type="chain" id="PRO_0000252350" description="ER lumen protein-retaining receptor 2">
    <location>
        <begin position="1"/>
        <end position="212"/>
    </location>
</feature>
<feature type="topological domain" description="Lumenal" evidence="4">
    <location>
        <begin position="1"/>
        <end position="4"/>
    </location>
</feature>
<feature type="transmembrane region" description="Helical" evidence="3">
    <location>
        <begin position="5"/>
        <end position="24"/>
    </location>
</feature>
<feature type="topological domain" description="Cytoplasmic" evidence="4">
    <location>
        <begin position="25"/>
        <end position="32"/>
    </location>
</feature>
<feature type="transmembrane region" description="Helical" evidence="3">
    <location>
        <begin position="33"/>
        <end position="52"/>
    </location>
</feature>
<feature type="topological domain" description="Lumenal" evidence="4">
    <location>
        <begin position="53"/>
        <end position="58"/>
    </location>
</feature>
<feature type="transmembrane region" description="Helical" evidence="3">
    <location>
        <begin position="59"/>
        <end position="79"/>
    </location>
</feature>
<feature type="topological domain" description="Cytoplasmic" evidence="4">
    <location>
        <begin position="80"/>
        <end position="92"/>
    </location>
</feature>
<feature type="transmembrane region" description="Helical" evidence="3">
    <location>
        <begin position="93"/>
        <end position="110"/>
    </location>
</feature>
<feature type="topological domain" description="Lumenal" evidence="4">
    <location>
        <begin position="111"/>
        <end position="116"/>
    </location>
</feature>
<feature type="transmembrane region" description="Helical" evidence="3">
    <location>
        <begin position="117"/>
        <end position="135"/>
    </location>
</feature>
<feature type="topological domain" description="Cytoplasmic" evidence="4">
    <location>
        <begin position="136"/>
        <end position="149"/>
    </location>
</feature>
<feature type="transmembrane region" description="Helical" evidence="3">
    <location>
        <begin position="150"/>
        <end position="168"/>
    </location>
</feature>
<feature type="topological domain" description="Lumenal" evidence="4">
    <location>
        <begin position="169"/>
        <end position="178"/>
    </location>
</feature>
<feature type="transmembrane region" description="Helical" evidence="3">
    <location>
        <begin position="179"/>
        <end position="199"/>
    </location>
</feature>
<feature type="topological domain" description="Cytoplasmic" evidence="4">
    <location>
        <begin position="200"/>
        <end position="212"/>
    </location>
</feature>
<feature type="region of interest" description="Interaction with the K-D-E-L motif on target proteins" evidence="3">
    <location>
        <begin position="47"/>
        <end position="48"/>
    </location>
</feature>
<feature type="region of interest" description="Interaction with the K-D-E-L motif on target proteins" evidence="3">
    <location>
        <begin position="159"/>
        <end position="169"/>
    </location>
</feature>
<feature type="region of interest" description="Important for recycling of cargo proteins with the sequence motif K-D-E-L from the Golgi to the endoplasmic reticulum" evidence="1">
    <location>
        <begin position="204"/>
        <end position="207"/>
    </location>
</feature>
<feature type="site" description="Interaction with the K-D-E-L motif on target proteins" evidence="3">
    <location>
        <position position="5"/>
    </location>
</feature>
<feature type="site" description="Interaction with the K-D-E-L motif on target proteins" evidence="3">
    <location>
        <position position="54"/>
    </location>
</feature>
<feature type="site" description="Interaction with the K-D-E-L motif on target proteins" evidence="3">
    <location>
        <position position="117"/>
    </location>
</feature>
<feature type="site" description="Important for recycling of cargo proteins with the sequence motif K-D-E-L from the Golgi to the endoplasmic reticulum" evidence="1">
    <location>
        <position position="193"/>
    </location>
</feature>
<protein>
    <recommendedName>
        <fullName>ER lumen protein-retaining receptor 2</fullName>
    </recommendedName>
    <alternativeName>
        <fullName>KDEL endoplasmic reticulum protein retention receptor 2</fullName>
        <shortName>KDEL receptor 2</shortName>
    </alternativeName>
</protein>
<sequence>MNVFRLSGDLCHLAAIIILLLKIWNSRSCAGISGKSQLLFAMVFTTRYLDLFTSFISLYNTSMKVIYMGCAYATVYLIYMKFKATYDGNHDTFRVEFLVVPVGGLSVLVNHDFSPLEILWTFSIYLESVAILPQLFMISKTGEAETITTHYLFFLGLYRALYLFNWIWRFSFEGFFDLIAIVAGVVQTILYCDFFYLYVTKVLKGKKLSLPA</sequence>
<accession>Q7ZXS5</accession>
<gene>
    <name type="primary">kdelr2</name>
</gene>